<evidence type="ECO:0000250" key="1"/>
<evidence type="ECO:0000305" key="2"/>
<gene>
    <name type="ordered locus">SACOL2296</name>
</gene>
<sequence length="317" mass="34675">MEKVYVAGAIPEVGLKLLQEHFEVEMYEGKGLVDKDTLIKGVKNATALISLLSTNVDKDVIDAGKDLKIIANYGAGFNNIDIEYAREKSIDVTNTPKASTNATADLTIGLVLAVARRIVEGDQLSRTTGFDGWAPLFFRGREVSGKTIGIIGLGEIGSAVARRARAFDMDVLYTGPNRKEEKEREIGAKYVDLDTLLKNADFITINAAYNPKMHHLIDTEQFKMMKSTAYLINASRGPIVHEQALVQALKDNEIEGAALDVYEFEPDITDDLKSLNNVVLTPHIGNATFEARDMMSKIVANAAISAVQGEKPQFVVN</sequence>
<proteinExistence type="inferred from homology"/>
<dbReference type="EC" id="1.1.1.-"/>
<dbReference type="EMBL" id="CP000046">
    <property type="protein sequence ID" value="AAW38516.1"/>
    <property type="molecule type" value="Genomic_DNA"/>
</dbReference>
<dbReference type="RefSeq" id="WP_000417016.1">
    <property type="nucleotide sequence ID" value="NZ_JBGOFO010000004.1"/>
</dbReference>
<dbReference type="SMR" id="Q5HDQ4"/>
<dbReference type="KEGG" id="sac:SACOL2296"/>
<dbReference type="HOGENOM" id="CLU_019796_1_2_9"/>
<dbReference type="Proteomes" id="UP000000530">
    <property type="component" value="Chromosome"/>
</dbReference>
<dbReference type="GO" id="GO:0051287">
    <property type="term" value="F:NAD binding"/>
    <property type="evidence" value="ECO:0007669"/>
    <property type="project" value="InterPro"/>
</dbReference>
<dbReference type="GO" id="GO:0016616">
    <property type="term" value="F:oxidoreductase activity, acting on the CH-OH group of donors, NAD or NADP as acceptor"/>
    <property type="evidence" value="ECO:0007669"/>
    <property type="project" value="InterPro"/>
</dbReference>
<dbReference type="CDD" id="cd12178">
    <property type="entry name" value="2-Hacid_dh_13"/>
    <property type="match status" value="1"/>
</dbReference>
<dbReference type="FunFam" id="3.40.50.720:FF:000462">
    <property type="entry name" value="Glyoxylate reductase (NADP+)"/>
    <property type="match status" value="1"/>
</dbReference>
<dbReference type="Gene3D" id="3.40.50.720">
    <property type="entry name" value="NAD(P)-binding Rossmann-like Domain"/>
    <property type="match status" value="2"/>
</dbReference>
<dbReference type="InterPro" id="IPR050857">
    <property type="entry name" value="D-2-hydroxyacid_DH"/>
</dbReference>
<dbReference type="InterPro" id="IPR006139">
    <property type="entry name" value="D-isomer_2_OHA_DH_cat_dom"/>
</dbReference>
<dbReference type="InterPro" id="IPR006140">
    <property type="entry name" value="D-isomer_DH_NAD-bd"/>
</dbReference>
<dbReference type="InterPro" id="IPR036291">
    <property type="entry name" value="NAD(P)-bd_dom_sf"/>
</dbReference>
<dbReference type="PANTHER" id="PTHR42789">
    <property type="entry name" value="D-ISOMER SPECIFIC 2-HYDROXYACID DEHYDROGENASE FAMILY PROTEIN (AFU_ORTHOLOGUE AFUA_6G10090)"/>
    <property type="match status" value="1"/>
</dbReference>
<dbReference type="PANTHER" id="PTHR42789:SF1">
    <property type="entry name" value="D-ISOMER SPECIFIC 2-HYDROXYACID DEHYDROGENASE FAMILY PROTEIN (AFU_ORTHOLOGUE AFUA_6G10090)"/>
    <property type="match status" value="1"/>
</dbReference>
<dbReference type="Pfam" id="PF00389">
    <property type="entry name" value="2-Hacid_dh"/>
    <property type="match status" value="1"/>
</dbReference>
<dbReference type="Pfam" id="PF02826">
    <property type="entry name" value="2-Hacid_dh_C"/>
    <property type="match status" value="1"/>
</dbReference>
<dbReference type="SUPFAM" id="SSF52283">
    <property type="entry name" value="Formate/glycerate dehydrogenase catalytic domain-like"/>
    <property type="match status" value="1"/>
</dbReference>
<dbReference type="SUPFAM" id="SSF51735">
    <property type="entry name" value="NAD(P)-binding Rossmann-fold domains"/>
    <property type="match status" value="1"/>
</dbReference>
<name>Y2296_STAAC</name>
<keyword id="KW-0520">NAD</keyword>
<keyword id="KW-0560">Oxidoreductase</keyword>
<protein>
    <recommendedName>
        <fullName>Putative 2-hydroxyacid dehydrogenase SACOL2296</fullName>
        <ecNumber>1.1.1.-</ecNumber>
    </recommendedName>
</protein>
<feature type="chain" id="PRO_0000312183" description="Putative 2-hydroxyacid dehydrogenase SACOL2296">
    <location>
        <begin position="1"/>
        <end position="317"/>
    </location>
</feature>
<feature type="active site" evidence="1">
    <location>
        <position position="236"/>
    </location>
</feature>
<feature type="active site" evidence="1">
    <location>
        <position position="265"/>
    </location>
</feature>
<feature type="active site" description="Proton donor" evidence="1">
    <location>
        <position position="283"/>
    </location>
</feature>
<feature type="binding site" evidence="1">
    <location>
        <begin position="155"/>
        <end position="156"/>
    </location>
    <ligand>
        <name>NAD(+)</name>
        <dbReference type="ChEBI" id="CHEBI:57540"/>
    </ligand>
</feature>
<feature type="binding site" evidence="1">
    <location>
        <begin position="234"/>
        <end position="236"/>
    </location>
    <ligand>
        <name>NAD(+)</name>
        <dbReference type="ChEBI" id="CHEBI:57540"/>
    </ligand>
</feature>
<feature type="binding site" evidence="1">
    <location>
        <position position="260"/>
    </location>
    <ligand>
        <name>NAD(+)</name>
        <dbReference type="ChEBI" id="CHEBI:57540"/>
    </ligand>
</feature>
<feature type="binding site" evidence="1">
    <location>
        <begin position="283"/>
        <end position="286"/>
    </location>
    <ligand>
        <name>NAD(+)</name>
        <dbReference type="ChEBI" id="CHEBI:57540"/>
    </ligand>
</feature>
<organism>
    <name type="scientific">Staphylococcus aureus (strain COL)</name>
    <dbReference type="NCBI Taxonomy" id="93062"/>
    <lineage>
        <taxon>Bacteria</taxon>
        <taxon>Bacillati</taxon>
        <taxon>Bacillota</taxon>
        <taxon>Bacilli</taxon>
        <taxon>Bacillales</taxon>
        <taxon>Staphylococcaceae</taxon>
        <taxon>Staphylococcus</taxon>
    </lineage>
</organism>
<accession>Q5HDQ4</accession>
<comment type="similarity">
    <text evidence="2">Belongs to the D-isomer specific 2-hydroxyacid dehydrogenase family.</text>
</comment>
<reference key="1">
    <citation type="journal article" date="2005" name="J. Bacteriol.">
        <title>Insights on evolution of virulence and resistance from the complete genome analysis of an early methicillin-resistant Staphylococcus aureus strain and a biofilm-producing methicillin-resistant Staphylococcus epidermidis strain.</title>
        <authorList>
            <person name="Gill S.R."/>
            <person name="Fouts D.E."/>
            <person name="Archer G.L."/>
            <person name="Mongodin E.F."/>
            <person name="DeBoy R.T."/>
            <person name="Ravel J."/>
            <person name="Paulsen I.T."/>
            <person name="Kolonay J.F."/>
            <person name="Brinkac L.M."/>
            <person name="Beanan M.J."/>
            <person name="Dodson R.J."/>
            <person name="Daugherty S.C."/>
            <person name="Madupu R."/>
            <person name="Angiuoli S.V."/>
            <person name="Durkin A.S."/>
            <person name="Haft D.H."/>
            <person name="Vamathevan J.J."/>
            <person name="Khouri H."/>
            <person name="Utterback T.R."/>
            <person name="Lee C."/>
            <person name="Dimitrov G."/>
            <person name="Jiang L."/>
            <person name="Qin H."/>
            <person name="Weidman J."/>
            <person name="Tran K."/>
            <person name="Kang K.H."/>
            <person name="Hance I.R."/>
            <person name="Nelson K.E."/>
            <person name="Fraser C.M."/>
        </authorList>
    </citation>
    <scope>NUCLEOTIDE SEQUENCE [LARGE SCALE GENOMIC DNA]</scope>
    <source>
        <strain>COL</strain>
    </source>
</reference>